<gene>
    <name evidence="1" type="primary">yihI</name>
    <name type="ordered locus">PC1_4225</name>
</gene>
<proteinExistence type="inferred from homology"/>
<protein>
    <recommendedName>
        <fullName evidence="1">Der GTPase-activating protein YihI</fullName>
    </recommendedName>
</protein>
<dbReference type="EMBL" id="CP001657">
    <property type="protein sequence ID" value="ACT15239.1"/>
    <property type="molecule type" value="Genomic_DNA"/>
</dbReference>
<dbReference type="RefSeq" id="WP_015842305.1">
    <property type="nucleotide sequence ID" value="NC_012917.1"/>
</dbReference>
<dbReference type="SMR" id="C6DJE0"/>
<dbReference type="STRING" id="561230.PC1_4225"/>
<dbReference type="KEGG" id="pct:PC1_4225"/>
<dbReference type="eggNOG" id="COG3078">
    <property type="taxonomic scope" value="Bacteria"/>
</dbReference>
<dbReference type="HOGENOM" id="CLU_094104_2_0_6"/>
<dbReference type="OrthoDB" id="5677577at2"/>
<dbReference type="Proteomes" id="UP000002736">
    <property type="component" value="Chromosome"/>
</dbReference>
<dbReference type="GO" id="GO:0005096">
    <property type="term" value="F:GTPase activator activity"/>
    <property type="evidence" value="ECO:0007669"/>
    <property type="project" value="UniProtKB-KW"/>
</dbReference>
<dbReference type="GO" id="GO:0042254">
    <property type="term" value="P:ribosome biogenesis"/>
    <property type="evidence" value="ECO:0007669"/>
    <property type="project" value="UniProtKB-KW"/>
</dbReference>
<dbReference type="HAMAP" id="MF_01058">
    <property type="entry name" value="GAP_YihI"/>
    <property type="match status" value="1"/>
</dbReference>
<dbReference type="InterPro" id="IPR007336">
    <property type="entry name" value="YihI"/>
</dbReference>
<dbReference type="NCBIfam" id="NF003560">
    <property type="entry name" value="PRK05244.1-1"/>
    <property type="match status" value="1"/>
</dbReference>
<dbReference type="Pfam" id="PF04220">
    <property type="entry name" value="YihI"/>
    <property type="match status" value="1"/>
</dbReference>
<organism>
    <name type="scientific">Pectobacterium carotovorum subsp. carotovorum (strain PC1)</name>
    <dbReference type="NCBI Taxonomy" id="561230"/>
    <lineage>
        <taxon>Bacteria</taxon>
        <taxon>Pseudomonadati</taxon>
        <taxon>Pseudomonadota</taxon>
        <taxon>Gammaproteobacteria</taxon>
        <taxon>Enterobacterales</taxon>
        <taxon>Pectobacteriaceae</taxon>
        <taxon>Pectobacterium</taxon>
    </lineage>
</organism>
<evidence type="ECO:0000255" key="1">
    <source>
        <dbReference type="HAMAP-Rule" id="MF_01058"/>
    </source>
</evidence>
<evidence type="ECO:0000256" key="2">
    <source>
        <dbReference type="SAM" id="MobiDB-lite"/>
    </source>
</evidence>
<comment type="function">
    <text evidence="1">A GTPase-activating protein (GAP) that modifies Der/EngA GTPase function. May play a role in ribosome biogenesis.</text>
</comment>
<comment type="subunit">
    <text evidence="1">Interacts with Der.</text>
</comment>
<comment type="similarity">
    <text evidence="1">Belongs to the YihI family.</text>
</comment>
<feature type="chain" id="PRO_1000213445" description="Der GTPase-activating protein YihI">
    <location>
        <begin position="1"/>
        <end position="184"/>
    </location>
</feature>
<feature type="region of interest" description="Disordered" evidence="2">
    <location>
        <begin position="1"/>
        <end position="107"/>
    </location>
</feature>
<feature type="compositionally biased region" description="Basic and acidic residues" evidence="2">
    <location>
        <begin position="21"/>
        <end position="32"/>
    </location>
</feature>
<feature type="compositionally biased region" description="Low complexity" evidence="2">
    <location>
        <begin position="80"/>
        <end position="95"/>
    </location>
</feature>
<reference key="1">
    <citation type="submission" date="2009-07" db="EMBL/GenBank/DDBJ databases">
        <title>Complete sequence of Pectobacterium carotovorum subsp. carotovorum PC1.</title>
        <authorList>
            <consortium name="US DOE Joint Genome Institute"/>
            <person name="Lucas S."/>
            <person name="Copeland A."/>
            <person name="Lapidus A."/>
            <person name="Glavina del Rio T."/>
            <person name="Tice H."/>
            <person name="Bruce D."/>
            <person name="Goodwin L."/>
            <person name="Pitluck S."/>
            <person name="Munk A.C."/>
            <person name="Brettin T."/>
            <person name="Detter J.C."/>
            <person name="Han C."/>
            <person name="Tapia R."/>
            <person name="Larimer F."/>
            <person name="Land M."/>
            <person name="Hauser L."/>
            <person name="Kyrpides N."/>
            <person name="Mikhailova N."/>
            <person name="Balakrishnan V."/>
            <person name="Glasner J."/>
            <person name="Perna N.T."/>
        </authorList>
    </citation>
    <scope>NUCLEOTIDE SEQUENCE [LARGE SCALE GENOMIC DNA]</scope>
    <source>
        <strain>PC1</strain>
    </source>
</reference>
<keyword id="KW-0343">GTPase activation</keyword>
<keyword id="KW-0690">Ribosome biogenesis</keyword>
<name>YIHI_PECCP</name>
<accession>C6DJE0</accession>
<sequence>MNRPVKGAADKAGKPKVKRKTREELEREARERKKDKKHRGHVAGSRTQEKASTDQRSGQRKAADPRIGSKKPVPLGVLDSAVAKPKPKSKPSAPVENVVAAKPTMSPEEELEMLENDSRLDALLDRLDSGETLSAKDQSWVDETLDRIDILMEELGIELGDDDEEEPQEDMLQLLKRNNPKDAF</sequence>